<name>RS13_LACE2</name>
<reference key="1">
    <citation type="journal article" date="2009" name="Proc. Natl. Acad. Sci. U.S.A.">
        <title>Characterizing a model human gut microbiota composed of members of its two dominant bacterial phyla.</title>
        <authorList>
            <person name="Mahowald M.A."/>
            <person name="Rey F.E."/>
            <person name="Seedorf H."/>
            <person name="Turnbaugh P.J."/>
            <person name="Fulton R.S."/>
            <person name="Wollam A."/>
            <person name="Shah N."/>
            <person name="Wang C."/>
            <person name="Magrini V."/>
            <person name="Wilson R.K."/>
            <person name="Cantarel B.L."/>
            <person name="Coutinho P.M."/>
            <person name="Henrissat B."/>
            <person name="Crock L.W."/>
            <person name="Russell A."/>
            <person name="Verberkmoes N.C."/>
            <person name="Hettich R.L."/>
            <person name="Gordon J.I."/>
        </authorList>
    </citation>
    <scope>NUCLEOTIDE SEQUENCE [LARGE SCALE GENOMIC DNA]</scope>
    <source>
        <strain>ATCC 27750 / DSM 3376 / VPI C15-48 / C15-B4</strain>
    </source>
</reference>
<evidence type="ECO:0000255" key="1">
    <source>
        <dbReference type="HAMAP-Rule" id="MF_01315"/>
    </source>
</evidence>
<evidence type="ECO:0000256" key="2">
    <source>
        <dbReference type="SAM" id="MobiDB-lite"/>
    </source>
</evidence>
<evidence type="ECO:0000305" key="3"/>
<accession>C4Z2V4</accession>
<organism>
    <name type="scientific">Lachnospira eligens (strain ATCC 27750 / DSM 3376 / VPI C15-48 / C15-B4)</name>
    <name type="common">Eubacterium eligens</name>
    <dbReference type="NCBI Taxonomy" id="515620"/>
    <lineage>
        <taxon>Bacteria</taxon>
        <taxon>Bacillati</taxon>
        <taxon>Bacillota</taxon>
        <taxon>Clostridia</taxon>
        <taxon>Lachnospirales</taxon>
        <taxon>Lachnospiraceae</taxon>
        <taxon>Lachnospira</taxon>
    </lineage>
</organism>
<dbReference type="EMBL" id="CP001104">
    <property type="protein sequence ID" value="ACR71359.1"/>
    <property type="molecule type" value="Genomic_DNA"/>
</dbReference>
<dbReference type="RefSeq" id="WP_012738596.1">
    <property type="nucleotide sequence ID" value="NC_012778.1"/>
</dbReference>
<dbReference type="SMR" id="C4Z2V4"/>
<dbReference type="STRING" id="515620.EUBELI_00323"/>
<dbReference type="GeneID" id="41355097"/>
<dbReference type="KEGG" id="eel:EUBELI_00323"/>
<dbReference type="eggNOG" id="COG0099">
    <property type="taxonomic scope" value="Bacteria"/>
</dbReference>
<dbReference type="HOGENOM" id="CLU_103849_1_2_9"/>
<dbReference type="Proteomes" id="UP000001476">
    <property type="component" value="Chromosome"/>
</dbReference>
<dbReference type="GO" id="GO:0005829">
    <property type="term" value="C:cytosol"/>
    <property type="evidence" value="ECO:0007669"/>
    <property type="project" value="TreeGrafter"/>
</dbReference>
<dbReference type="GO" id="GO:0015935">
    <property type="term" value="C:small ribosomal subunit"/>
    <property type="evidence" value="ECO:0007669"/>
    <property type="project" value="TreeGrafter"/>
</dbReference>
<dbReference type="GO" id="GO:0019843">
    <property type="term" value="F:rRNA binding"/>
    <property type="evidence" value="ECO:0007669"/>
    <property type="project" value="UniProtKB-UniRule"/>
</dbReference>
<dbReference type="GO" id="GO:0003735">
    <property type="term" value="F:structural constituent of ribosome"/>
    <property type="evidence" value="ECO:0007669"/>
    <property type="project" value="InterPro"/>
</dbReference>
<dbReference type="GO" id="GO:0000049">
    <property type="term" value="F:tRNA binding"/>
    <property type="evidence" value="ECO:0007669"/>
    <property type="project" value="UniProtKB-UniRule"/>
</dbReference>
<dbReference type="GO" id="GO:0006412">
    <property type="term" value="P:translation"/>
    <property type="evidence" value="ECO:0007669"/>
    <property type="project" value="UniProtKB-UniRule"/>
</dbReference>
<dbReference type="FunFam" id="1.10.8.50:FF:000001">
    <property type="entry name" value="30S ribosomal protein S13"/>
    <property type="match status" value="1"/>
</dbReference>
<dbReference type="FunFam" id="4.10.910.10:FF:000001">
    <property type="entry name" value="30S ribosomal protein S13"/>
    <property type="match status" value="1"/>
</dbReference>
<dbReference type="Gene3D" id="1.10.8.50">
    <property type="match status" value="1"/>
</dbReference>
<dbReference type="Gene3D" id="4.10.910.10">
    <property type="entry name" value="30s ribosomal protein s13, domain 2"/>
    <property type="match status" value="1"/>
</dbReference>
<dbReference type="HAMAP" id="MF_01315">
    <property type="entry name" value="Ribosomal_uS13"/>
    <property type="match status" value="1"/>
</dbReference>
<dbReference type="InterPro" id="IPR027437">
    <property type="entry name" value="Rbsml_uS13_C"/>
</dbReference>
<dbReference type="InterPro" id="IPR001892">
    <property type="entry name" value="Ribosomal_uS13"/>
</dbReference>
<dbReference type="InterPro" id="IPR010979">
    <property type="entry name" value="Ribosomal_uS13-like_H2TH"/>
</dbReference>
<dbReference type="InterPro" id="IPR019980">
    <property type="entry name" value="Ribosomal_uS13_bac-type"/>
</dbReference>
<dbReference type="InterPro" id="IPR018269">
    <property type="entry name" value="Ribosomal_uS13_CS"/>
</dbReference>
<dbReference type="NCBIfam" id="TIGR03631">
    <property type="entry name" value="uS13_bact"/>
    <property type="match status" value="1"/>
</dbReference>
<dbReference type="PANTHER" id="PTHR10871">
    <property type="entry name" value="30S RIBOSOMAL PROTEIN S13/40S RIBOSOMAL PROTEIN S18"/>
    <property type="match status" value="1"/>
</dbReference>
<dbReference type="PANTHER" id="PTHR10871:SF1">
    <property type="entry name" value="SMALL RIBOSOMAL SUBUNIT PROTEIN US13M"/>
    <property type="match status" value="1"/>
</dbReference>
<dbReference type="Pfam" id="PF00416">
    <property type="entry name" value="Ribosomal_S13"/>
    <property type="match status" value="1"/>
</dbReference>
<dbReference type="PIRSF" id="PIRSF002134">
    <property type="entry name" value="Ribosomal_S13"/>
    <property type="match status" value="1"/>
</dbReference>
<dbReference type="SUPFAM" id="SSF46946">
    <property type="entry name" value="S13-like H2TH domain"/>
    <property type="match status" value="1"/>
</dbReference>
<dbReference type="PROSITE" id="PS00646">
    <property type="entry name" value="RIBOSOMAL_S13_1"/>
    <property type="match status" value="1"/>
</dbReference>
<dbReference type="PROSITE" id="PS50159">
    <property type="entry name" value="RIBOSOMAL_S13_2"/>
    <property type="match status" value="1"/>
</dbReference>
<sequence length="124" mass="13935">MARISGVDLPREKRIEIGLTYVYGIGRVRASKILEEAGVNPDTRVKDLTDEEVAKIAKVIDADPEHLVEGDLRREVAMNIKRLKEIGCYRGIRHRKGLPCRGQKTKTNARTCKGPKKTVANKKK</sequence>
<protein>
    <recommendedName>
        <fullName evidence="1">Small ribosomal subunit protein uS13</fullName>
    </recommendedName>
    <alternativeName>
        <fullName evidence="3">30S ribosomal protein S13</fullName>
    </alternativeName>
</protein>
<comment type="function">
    <text evidence="1">Located at the top of the head of the 30S subunit, it contacts several helices of the 16S rRNA. In the 70S ribosome it contacts the 23S rRNA (bridge B1a) and protein L5 of the 50S subunit (bridge B1b), connecting the 2 subunits; these bridges are implicated in subunit movement. Contacts the tRNAs in the A and P-sites.</text>
</comment>
<comment type="subunit">
    <text evidence="1">Part of the 30S ribosomal subunit. Forms a loose heterodimer with protein S19. Forms two bridges to the 50S subunit in the 70S ribosome.</text>
</comment>
<comment type="similarity">
    <text evidence="1">Belongs to the universal ribosomal protein uS13 family.</text>
</comment>
<feature type="chain" id="PRO_1000214392" description="Small ribosomal subunit protein uS13">
    <location>
        <begin position="1"/>
        <end position="124"/>
    </location>
</feature>
<feature type="region of interest" description="Disordered" evidence="2">
    <location>
        <begin position="99"/>
        <end position="124"/>
    </location>
</feature>
<feature type="compositionally biased region" description="Basic residues" evidence="2">
    <location>
        <begin position="113"/>
        <end position="124"/>
    </location>
</feature>
<proteinExistence type="inferred from homology"/>
<keyword id="KW-1185">Reference proteome</keyword>
<keyword id="KW-0687">Ribonucleoprotein</keyword>
<keyword id="KW-0689">Ribosomal protein</keyword>
<keyword id="KW-0694">RNA-binding</keyword>
<keyword id="KW-0699">rRNA-binding</keyword>
<keyword id="KW-0820">tRNA-binding</keyword>
<gene>
    <name evidence="1" type="primary">rpsM</name>
    <name type="ordered locus">EUBELI_00323</name>
</gene>